<keyword id="KW-1003">Cell membrane</keyword>
<keyword id="KW-0472">Membrane</keyword>
<keyword id="KW-0520">NAD</keyword>
<keyword id="KW-0874">Quinone</keyword>
<keyword id="KW-1185">Reference proteome</keyword>
<keyword id="KW-1278">Translocase</keyword>
<keyword id="KW-0812">Transmembrane</keyword>
<keyword id="KW-1133">Transmembrane helix</keyword>
<keyword id="KW-0813">Transport</keyword>
<protein>
    <recommendedName>
        <fullName evidence="1">NADH-quinone oxidoreductase subunit N</fullName>
        <ecNumber evidence="1">7.1.1.-</ecNumber>
    </recommendedName>
    <alternativeName>
        <fullName evidence="1">NADH dehydrogenase I subunit N</fullName>
    </alternativeName>
    <alternativeName>
        <fullName evidence="1">NDH-1 subunit N</fullName>
    </alternativeName>
</protein>
<name>NUON_BACAN</name>
<feature type="chain" id="PRO_0000391104" description="NADH-quinone oxidoreductase subunit N">
    <location>
        <begin position="1"/>
        <end position="506"/>
    </location>
</feature>
<feature type="transmembrane region" description="Helical" evidence="1">
    <location>
        <begin position="14"/>
        <end position="34"/>
    </location>
</feature>
<feature type="transmembrane region" description="Helical" evidence="1">
    <location>
        <begin position="40"/>
        <end position="60"/>
    </location>
</feature>
<feature type="transmembrane region" description="Helical" evidence="1">
    <location>
        <begin position="72"/>
        <end position="92"/>
    </location>
</feature>
<feature type="transmembrane region" description="Helical" evidence="1">
    <location>
        <begin position="109"/>
        <end position="129"/>
    </location>
</feature>
<feature type="transmembrane region" description="Helical" evidence="1">
    <location>
        <begin position="131"/>
        <end position="151"/>
    </location>
</feature>
<feature type="transmembrane region" description="Helical" evidence="1">
    <location>
        <begin position="166"/>
        <end position="186"/>
    </location>
</feature>
<feature type="transmembrane region" description="Helical" evidence="1">
    <location>
        <begin position="209"/>
        <end position="229"/>
    </location>
</feature>
<feature type="transmembrane region" description="Helical" evidence="1">
    <location>
        <begin position="256"/>
        <end position="276"/>
    </location>
</feature>
<feature type="transmembrane region" description="Helical" evidence="1">
    <location>
        <begin position="286"/>
        <end position="306"/>
    </location>
</feature>
<feature type="transmembrane region" description="Helical" evidence="1">
    <location>
        <begin position="314"/>
        <end position="334"/>
    </location>
</feature>
<feature type="transmembrane region" description="Helical" evidence="1">
    <location>
        <begin position="343"/>
        <end position="363"/>
    </location>
</feature>
<feature type="transmembrane region" description="Helical" evidence="1">
    <location>
        <begin position="385"/>
        <end position="405"/>
    </location>
</feature>
<feature type="transmembrane region" description="Helical" evidence="1">
    <location>
        <begin position="420"/>
        <end position="440"/>
    </location>
</feature>
<feature type="transmembrane region" description="Helical" evidence="1">
    <location>
        <begin position="465"/>
        <end position="485"/>
    </location>
</feature>
<proteinExistence type="inferred from homology"/>
<evidence type="ECO:0000255" key="1">
    <source>
        <dbReference type="HAMAP-Rule" id="MF_00445"/>
    </source>
</evidence>
<dbReference type="EC" id="7.1.1.-" evidence="1"/>
<dbReference type="EMBL" id="AE016879">
    <property type="protein sequence ID" value="AAP29176.1"/>
    <property type="molecule type" value="Genomic_DNA"/>
</dbReference>
<dbReference type="EMBL" id="AE017334">
    <property type="protein sequence ID" value="AAT34675.1"/>
    <property type="molecule type" value="Genomic_DNA"/>
</dbReference>
<dbReference type="EMBL" id="AE017225">
    <property type="protein sequence ID" value="AAT57429.1"/>
    <property type="molecule type" value="Genomic_DNA"/>
</dbReference>
<dbReference type="RefSeq" id="NP_847690.1">
    <property type="nucleotide sequence ID" value="NC_003997.3"/>
</dbReference>
<dbReference type="RefSeq" id="YP_031379.1">
    <property type="nucleotide sequence ID" value="NC_005945.1"/>
</dbReference>
<dbReference type="SMR" id="Q81K10"/>
<dbReference type="STRING" id="261594.GBAA_5532"/>
<dbReference type="DNASU" id="1085201"/>
<dbReference type="KEGG" id="ban:BA_5532"/>
<dbReference type="KEGG" id="bar:GBAA_5532"/>
<dbReference type="KEGG" id="bat:BAS5140"/>
<dbReference type="PATRIC" id="fig|198094.11.peg.5492"/>
<dbReference type="eggNOG" id="COG1007">
    <property type="taxonomic scope" value="Bacteria"/>
</dbReference>
<dbReference type="HOGENOM" id="CLU_007100_1_1_9"/>
<dbReference type="OMA" id="LMFFSEP"/>
<dbReference type="OrthoDB" id="9811718at2"/>
<dbReference type="Proteomes" id="UP000000427">
    <property type="component" value="Chromosome"/>
</dbReference>
<dbReference type="Proteomes" id="UP000000594">
    <property type="component" value="Chromosome"/>
</dbReference>
<dbReference type="GO" id="GO:0005886">
    <property type="term" value="C:plasma membrane"/>
    <property type="evidence" value="ECO:0007669"/>
    <property type="project" value="UniProtKB-SubCell"/>
</dbReference>
<dbReference type="GO" id="GO:0008137">
    <property type="term" value="F:NADH dehydrogenase (ubiquinone) activity"/>
    <property type="evidence" value="ECO:0007669"/>
    <property type="project" value="InterPro"/>
</dbReference>
<dbReference type="GO" id="GO:0050136">
    <property type="term" value="F:NADH:ubiquinone reductase (non-electrogenic) activity"/>
    <property type="evidence" value="ECO:0007669"/>
    <property type="project" value="UniProtKB-UniRule"/>
</dbReference>
<dbReference type="GO" id="GO:0048038">
    <property type="term" value="F:quinone binding"/>
    <property type="evidence" value="ECO:0007669"/>
    <property type="project" value="UniProtKB-KW"/>
</dbReference>
<dbReference type="GO" id="GO:0042773">
    <property type="term" value="P:ATP synthesis coupled electron transport"/>
    <property type="evidence" value="ECO:0007669"/>
    <property type="project" value="InterPro"/>
</dbReference>
<dbReference type="HAMAP" id="MF_00445">
    <property type="entry name" value="NDH1_NuoN_1"/>
    <property type="match status" value="1"/>
</dbReference>
<dbReference type="InterPro" id="IPR010096">
    <property type="entry name" value="NADH-Q_OxRdtase_suN/2"/>
</dbReference>
<dbReference type="InterPro" id="IPR001750">
    <property type="entry name" value="ND/Mrp_TM"/>
</dbReference>
<dbReference type="NCBIfam" id="TIGR01770">
    <property type="entry name" value="NDH_I_N"/>
    <property type="match status" value="1"/>
</dbReference>
<dbReference type="NCBIfam" id="NF004443">
    <property type="entry name" value="PRK05777.2-1"/>
    <property type="match status" value="1"/>
</dbReference>
<dbReference type="NCBIfam" id="NF004446">
    <property type="entry name" value="PRK05777.2-4"/>
    <property type="match status" value="1"/>
</dbReference>
<dbReference type="PANTHER" id="PTHR22773">
    <property type="entry name" value="NADH DEHYDROGENASE"/>
    <property type="match status" value="1"/>
</dbReference>
<dbReference type="Pfam" id="PF00361">
    <property type="entry name" value="Proton_antipo_M"/>
    <property type="match status" value="1"/>
</dbReference>
<comment type="function">
    <text evidence="1">NDH-1 shuttles electrons from NADH, via FMN and iron-sulfur (Fe-S) centers, to quinones in the respiratory chain. The immediate electron acceptor for the enzyme in this species is believed to be a menaquinone. Couples the redox reaction to proton translocation (for every two electrons transferred, four hydrogen ions are translocated across the cytoplasmic membrane), and thus conserves the redox energy in a proton gradient.</text>
</comment>
<comment type="catalytic activity">
    <reaction evidence="1">
        <text>a quinone + NADH + 5 H(+)(in) = a quinol + NAD(+) + 4 H(+)(out)</text>
        <dbReference type="Rhea" id="RHEA:57888"/>
        <dbReference type="ChEBI" id="CHEBI:15378"/>
        <dbReference type="ChEBI" id="CHEBI:24646"/>
        <dbReference type="ChEBI" id="CHEBI:57540"/>
        <dbReference type="ChEBI" id="CHEBI:57945"/>
        <dbReference type="ChEBI" id="CHEBI:132124"/>
    </reaction>
</comment>
<comment type="subunit">
    <text evidence="1">NDH-1 is composed of 14 different subunits. Subunits NuoA, H, J, K, L, M, N constitute the membrane sector of the complex.</text>
</comment>
<comment type="subcellular location">
    <subcellularLocation>
        <location evidence="1">Cell membrane</location>
        <topology evidence="1">Multi-pass membrane protein</topology>
    </subcellularLocation>
</comment>
<comment type="similarity">
    <text evidence="1">Belongs to the complex I subunit 2 family.</text>
</comment>
<accession>Q81K10</accession>
<accession>Q6HQK9</accession>
<accession>Q6KJY3</accession>
<sequence length="506" mass="55596">MDMNTLLSLSWHLMVPEFIILGAAILLSICDLFFKLNHRYVALGAIAAVVLAIVSLITLYSEPAGDILNGSFVLDGFSKGFKTLLLGGAALILCTAMSDDKKNPIEDKGEYYYLFLMALLGAMFMASSVDFVTLFVGLELLSLSSYILVGIRKKNRASNEAAMKYVINGGIGTAITLFGMSYLYGITGSTNIVDMQKVFAGELASGIQLLLALAFLLLLVGLSFKIATVPFHMWAPDVYEGAATPVTAFLGTISKMAGFLLIIRLFLMVFASVSVQGDMQSLYGRMSIYIAVLASITMIIGNVVALKQYNVKRLFAYSGIAHAGYLLVPLVALSPFTMDSMWFYMLAYMLMNIGAFAIIHGLILQSNKENITIFTGLYKRSPFTAIVMTIFILSLAGIPGTAGFIGKINIFLGALHVEPAHYVLASIMMGTTVISFVYYFRILQQMFFRTGEVEEKIRLPLNIKIVMSFCAISIVILGIVPMIGYNFFYEYFPLMKDFFFLGNVVQ</sequence>
<reference key="1">
    <citation type="journal article" date="2003" name="Nature">
        <title>The genome sequence of Bacillus anthracis Ames and comparison to closely related bacteria.</title>
        <authorList>
            <person name="Read T.D."/>
            <person name="Peterson S.N."/>
            <person name="Tourasse N.J."/>
            <person name="Baillie L.W."/>
            <person name="Paulsen I.T."/>
            <person name="Nelson K.E."/>
            <person name="Tettelin H."/>
            <person name="Fouts D.E."/>
            <person name="Eisen J.A."/>
            <person name="Gill S.R."/>
            <person name="Holtzapple E.K."/>
            <person name="Okstad O.A."/>
            <person name="Helgason E."/>
            <person name="Rilstone J."/>
            <person name="Wu M."/>
            <person name="Kolonay J.F."/>
            <person name="Beanan M.J."/>
            <person name="Dodson R.J."/>
            <person name="Brinkac L.M."/>
            <person name="Gwinn M.L."/>
            <person name="DeBoy R.T."/>
            <person name="Madpu R."/>
            <person name="Daugherty S.C."/>
            <person name="Durkin A.S."/>
            <person name="Haft D.H."/>
            <person name="Nelson W.C."/>
            <person name="Peterson J.D."/>
            <person name="Pop M."/>
            <person name="Khouri H.M."/>
            <person name="Radune D."/>
            <person name="Benton J.L."/>
            <person name="Mahamoud Y."/>
            <person name="Jiang L."/>
            <person name="Hance I.R."/>
            <person name="Weidman J.F."/>
            <person name="Berry K.J."/>
            <person name="Plaut R.D."/>
            <person name="Wolf A.M."/>
            <person name="Watkins K.L."/>
            <person name="Nierman W.C."/>
            <person name="Hazen A."/>
            <person name="Cline R.T."/>
            <person name="Redmond C."/>
            <person name="Thwaite J.E."/>
            <person name="White O."/>
            <person name="Salzberg S.L."/>
            <person name="Thomason B."/>
            <person name="Friedlander A.M."/>
            <person name="Koehler T.M."/>
            <person name="Hanna P.C."/>
            <person name="Kolstoe A.-B."/>
            <person name="Fraser C.M."/>
        </authorList>
    </citation>
    <scope>NUCLEOTIDE SEQUENCE [LARGE SCALE GENOMIC DNA]</scope>
    <source>
        <strain>Ames / isolate Porton</strain>
    </source>
</reference>
<reference key="2">
    <citation type="submission" date="2004-01" db="EMBL/GenBank/DDBJ databases">
        <title>Complete genome sequence of Bacillus anthracis Sterne.</title>
        <authorList>
            <person name="Brettin T.S."/>
            <person name="Bruce D."/>
            <person name="Challacombe J.F."/>
            <person name="Gilna P."/>
            <person name="Han C."/>
            <person name="Hill K."/>
            <person name="Hitchcock P."/>
            <person name="Jackson P."/>
            <person name="Keim P."/>
            <person name="Longmire J."/>
            <person name="Lucas S."/>
            <person name="Okinaka R."/>
            <person name="Richardson P."/>
            <person name="Rubin E."/>
            <person name="Tice H."/>
        </authorList>
    </citation>
    <scope>NUCLEOTIDE SEQUENCE [LARGE SCALE GENOMIC DNA]</scope>
    <source>
        <strain>Sterne</strain>
    </source>
</reference>
<reference key="3">
    <citation type="journal article" date="2009" name="J. Bacteriol.">
        <title>The complete genome sequence of Bacillus anthracis Ames 'Ancestor'.</title>
        <authorList>
            <person name="Ravel J."/>
            <person name="Jiang L."/>
            <person name="Stanley S.T."/>
            <person name="Wilson M.R."/>
            <person name="Decker R.S."/>
            <person name="Read T.D."/>
            <person name="Worsham P."/>
            <person name="Keim P.S."/>
            <person name="Salzberg S.L."/>
            <person name="Fraser-Liggett C.M."/>
            <person name="Rasko D.A."/>
        </authorList>
    </citation>
    <scope>NUCLEOTIDE SEQUENCE [LARGE SCALE GENOMIC DNA]</scope>
    <source>
        <strain>Ames ancestor</strain>
    </source>
</reference>
<gene>
    <name evidence="1" type="primary">nuoN</name>
    <name type="ordered locus">BA_5532</name>
    <name type="ordered locus">GBAA_5532</name>
    <name type="ordered locus">BAS5140</name>
</gene>
<organism>
    <name type="scientific">Bacillus anthracis</name>
    <dbReference type="NCBI Taxonomy" id="1392"/>
    <lineage>
        <taxon>Bacteria</taxon>
        <taxon>Bacillati</taxon>
        <taxon>Bacillota</taxon>
        <taxon>Bacilli</taxon>
        <taxon>Bacillales</taxon>
        <taxon>Bacillaceae</taxon>
        <taxon>Bacillus</taxon>
        <taxon>Bacillus cereus group</taxon>
    </lineage>
</organism>